<gene>
    <name evidence="1" type="primary">leuD</name>
    <name type="ordered locus">EFER_0093</name>
</gene>
<evidence type="ECO:0000255" key="1">
    <source>
        <dbReference type="HAMAP-Rule" id="MF_01031"/>
    </source>
</evidence>
<reference key="1">
    <citation type="journal article" date="2009" name="PLoS Genet.">
        <title>Organised genome dynamics in the Escherichia coli species results in highly diverse adaptive paths.</title>
        <authorList>
            <person name="Touchon M."/>
            <person name="Hoede C."/>
            <person name="Tenaillon O."/>
            <person name="Barbe V."/>
            <person name="Baeriswyl S."/>
            <person name="Bidet P."/>
            <person name="Bingen E."/>
            <person name="Bonacorsi S."/>
            <person name="Bouchier C."/>
            <person name="Bouvet O."/>
            <person name="Calteau A."/>
            <person name="Chiapello H."/>
            <person name="Clermont O."/>
            <person name="Cruveiller S."/>
            <person name="Danchin A."/>
            <person name="Diard M."/>
            <person name="Dossat C."/>
            <person name="Karoui M.E."/>
            <person name="Frapy E."/>
            <person name="Garry L."/>
            <person name="Ghigo J.M."/>
            <person name="Gilles A.M."/>
            <person name="Johnson J."/>
            <person name="Le Bouguenec C."/>
            <person name="Lescat M."/>
            <person name="Mangenot S."/>
            <person name="Martinez-Jehanne V."/>
            <person name="Matic I."/>
            <person name="Nassif X."/>
            <person name="Oztas S."/>
            <person name="Petit M.A."/>
            <person name="Pichon C."/>
            <person name="Rouy Z."/>
            <person name="Ruf C.S."/>
            <person name="Schneider D."/>
            <person name="Tourret J."/>
            <person name="Vacherie B."/>
            <person name="Vallenet D."/>
            <person name="Medigue C."/>
            <person name="Rocha E.P.C."/>
            <person name="Denamur E."/>
        </authorList>
    </citation>
    <scope>NUCLEOTIDE SEQUENCE [LARGE SCALE GENOMIC DNA]</scope>
    <source>
        <strain>ATCC 35469 / DSM 13698 / BCRC 15582 / CCUG 18766 / IAM 14443 / JCM 21226 / LMG 7866 / NBRC 102419 / NCTC 12128 / CDC 0568-73</strain>
    </source>
</reference>
<protein>
    <recommendedName>
        <fullName evidence="1">3-isopropylmalate dehydratase small subunit</fullName>
        <ecNumber evidence="1">4.2.1.33</ecNumber>
    </recommendedName>
    <alternativeName>
        <fullName evidence="1">Alpha-IPM isomerase</fullName>
        <shortName evidence="1">IPMI</shortName>
    </alternativeName>
    <alternativeName>
        <fullName evidence="1">Isopropylmalate isomerase</fullName>
    </alternativeName>
</protein>
<name>LEUD_ESCF3</name>
<dbReference type="EC" id="4.2.1.33" evidence="1"/>
<dbReference type="EMBL" id="CU928158">
    <property type="protein sequence ID" value="CAQ87678.1"/>
    <property type="molecule type" value="Genomic_DNA"/>
</dbReference>
<dbReference type="RefSeq" id="WP_000818233.1">
    <property type="nucleotide sequence ID" value="NC_011740.1"/>
</dbReference>
<dbReference type="SMR" id="B7LWD9"/>
<dbReference type="GeneID" id="75058820"/>
<dbReference type="KEGG" id="efe:EFER_0093"/>
<dbReference type="HOGENOM" id="CLU_081378_0_3_6"/>
<dbReference type="OrthoDB" id="9777465at2"/>
<dbReference type="UniPathway" id="UPA00048">
    <property type="reaction ID" value="UER00071"/>
</dbReference>
<dbReference type="Proteomes" id="UP000000745">
    <property type="component" value="Chromosome"/>
</dbReference>
<dbReference type="GO" id="GO:0009316">
    <property type="term" value="C:3-isopropylmalate dehydratase complex"/>
    <property type="evidence" value="ECO:0007669"/>
    <property type="project" value="InterPro"/>
</dbReference>
<dbReference type="GO" id="GO:0003861">
    <property type="term" value="F:3-isopropylmalate dehydratase activity"/>
    <property type="evidence" value="ECO:0007669"/>
    <property type="project" value="UniProtKB-UniRule"/>
</dbReference>
<dbReference type="GO" id="GO:0009098">
    <property type="term" value="P:L-leucine biosynthetic process"/>
    <property type="evidence" value="ECO:0007669"/>
    <property type="project" value="UniProtKB-UniRule"/>
</dbReference>
<dbReference type="CDD" id="cd01577">
    <property type="entry name" value="IPMI_Swivel"/>
    <property type="match status" value="1"/>
</dbReference>
<dbReference type="FunFam" id="3.20.19.10:FF:000003">
    <property type="entry name" value="3-isopropylmalate dehydratase small subunit"/>
    <property type="match status" value="1"/>
</dbReference>
<dbReference type="Gene3D" id="3.20.19.10">
    <property type="entry name" value="Aconitase, domain 4"/>
    <property type="match status" value="1"/>
</dbReference>
<dbReference type="HAMAP" id="MF_01031">
    <property type="entry name" value="LeuD_type1"/>
    <property type="match status" value="1"/>
</dbReference>
<dbReference type="InterPro" id="IPR004431">
    <property type="entry name" value="3-IsopropMal_deHydase_ssu"/>
</dbReference>
<dbReference type="InterPro" id="IPR015928">
    <property type="entry name" value="Aconitase/3IPM_dehydase_swvl"/>
</dbReference>
<dbReference type="InterPro" id="IPR000573">
    <property type="entry name" value="AconitaseA/IPMdHydase_ssu_swvl"/>
</dbReference>
<dbReference type="InterPro" id="IPR033940">
    <property type="entry name" value="IPMI_Swivel"/>
</dbReference>
<dbReference type="InterPro" id="IPR050075">
    <property type="entry name" value="LeuD"/>
</dbReference>
<dbReference type="NCBIfam" id="TIGR00171">
    <property type="entry name" value="leuD"/>
    <property type="match status" value="1"/>
</dbReference>
<dbReference type="NCBIfam" id="NF002458">
    <property type="entry name" value="PRK01641.1"/>
    <property type="match status" value="1"/>
</dbReference>
<dbReference type="PANTHER" id="PTHR43345:SF5">
    <property type="entry name" value="3-ISOPROPYLMALATE DEHYDRATASE SMALL SUBUNIT"/>
    <property type="match status" value="1"/>
</dbReference>
<dbReference type="PANTHER" id="PTHR43345">
    <property type="entry name" value="3-ISOPROPYLMALATE DEHYDRATASE SMALL SUBUNIT 2-RELATED-RELATED"/>
    <property type="match status" value="1"/>
</dbReference>
<dbReference type="Pfam" id="PF00694">
    <property type="entry name" value="Aconitase_C"/>
    <property type="match status" value="1"/>
</dbReference>
<dbReference type="SUPFAM" id="SSF52016">
    <property type="entry name" value="LeuD/IlvD-like"/>
    <property type="match status" value="1"/>
</dbReference>
<feature type="chain" id="PRO_1000135808" description="3-isopropylmalate dehydratase small subunit">
    <location>
        <begin position="1"/>
        <end position="201"/>
    </location>
</feature>
<sequence>MAEKFIKHTGLVVPLDAANVDTDAIIPKQFLQKVTRTGFGAHLFNDWRFLDEKGQQPNPDFVLNFPQYQGASILLARENFGCGSSREHAPWALTDYGFKVVIAPSFADIFYGNSFNNQLLPVKLSDAEVDELFALVKANPGIHFDVDLEAQEVKVGEKTYRFTIDAFRRHCMMNGLDSIGLTLQHDDAIASYEAKQPAFMN</sequence>
<accession>B7LWD9</accession>
<organism>
    <name type="scientific">Escherichia fergusonii (strain ATCC 35469 / DSM 13698 / CCUG 18766 / IAM 14443 / JCM 21226 / LMG 7866 / NBRC 102419 / NCTC 12128 / CDC 0568-73)</name>
    <dbReference type="NCBI Taxonomy" id="585054"/>
    <lineage>
        <taxon>Bacteria</taxon>
        <taxon>Pseudomonadati</taxon>
        <taxon>Pseudomonadota</taxon>
        <taxon>Gammaproteobacteria</taxon>
        <taxon>Enterobacterales</taxon>
        <taxon>Enterobacteriaceae</taxon>
        <taxon>Escherichia</taxon>
    </lineage>
</organism>
<proteinExistence type="inferred from homology"/>
<keyword id="KW-0028">Amino-acid biosynthesis</keyword>
<keyword id="KW-0100">Branched-chain amino acid biosynthesis</keyword>
<keyword id="KW-0432">Leucine biosynthesis</keyword>
<keyword id="KW-0456">Lyase</keyword>
<comment type="function">
    <text evidence="1">Catalyzes the isomerization between 2-isopropylmalate and 3-isopropylmalate, via the formation of 2-isopropylmaleate.</text>
</comment>
<comment type="catalytic activity">
    <reaction evidence="1">
        <text>(2R,3S)-3-isopropylmalate = (2S)-2-isopropylmalate</text>
        <dbReference type="Rhea" id="RHEA:32287"/>
        <dbReference type="ChEBI" id="CHEBI:1178"/>
        <dbReference type="ChEBI" id="CHEBI:35121"/>
        <dbReference type="EC" id="4.2.1.33"/>
    </reaction>
</comment>
<comment type="pathway">
    <text evidence="1">Amino-acid biosynthesis; L-leucine biosynthesis; L-leucine from 3-methyl-2-oxobutanoate: step 2/4.</text>
</comment>
<comment type="subunit">
    <text evidence="1">Heterodimer of LeuC and LeuD.</text>
</comment>
<comment type="similarity">
    <text evidence="1">Belongs to the LeuD family. LeuD type 1 subfamily.</text>
</comment>